<accession>Q67381</accession>
<gene>
    <name type="primary">HA</name>
</gene>
<protein>
    <recommendedName>
        <fullName>Hemagglutinin</fullName>
    </recommendedName>
    <component>
        <recommendedName>
            <fullName>Hemagglutinin HA1 chain</fullName>
        </recommendedName>
    </component>
</protein>
<name>HEMA_INBVM</name>
<evidence type="ECO:0000250" key="1"/>
<evidence type="ECO:0000255" key="2"/>
<evidence type="ECO:0000305" key="3"/>
<organismHost>
    <name type="scientific">Homo sapiens</name>
    <name type="common">Human</name>
    <dbReference type="NCBI Taxonomy" id="9606"/>
</organismHost>
<keyword id="KW-1015">Disulfide bond</keyword>
<keyword id="KW-1170">Fusion of virus membrane with host endosomal membrane</keyword>
<keyword id="KW-1168">Fusion of virus membrane with host membrane</keyword>
<keyword id="KW-0325">Glycoprotein</keyword>
<keyword id="KW-0348">Hemagglutinin</keyword>
<keyword id="KW-1032">Host cell membrane</keyword>
<keyword id="KW-1043">Host membrane</keyword>
<keyword id="KW-0945">Host-virus interaction</keyword>
<keyword id="KW-0449">Lipoprotein</keyword>
<keyword id="KW-0472">Membrane</keyword>
<keyword id="KW-0564">Palmitate</keyword>
<keyword id="KW-0732">Signal</keyword>
<keyword id="KW-0812">Transmembrane</keyword>
<keyword id="KW-1161">Viral attachment to host cell</keyword>
<keyword id="KW-0261">Viral envelope protein</keyword>
<keyword id="KW-1162">Viral penetration into host cytoplasm</keyword>
<keyword id="KW-0946">Virion</keyword>
<keyword id="KW-1160">Virus entry into host cell</keyword>
<dbReference type="EMBL" id="M65177">
    <property type="protein sequence ID" value="AAA43715.1"/>
    <property type="molecule type" value="Genomic_RNA"/>
</dbReference>
<dbReference type="PIR" id="JQ1905">
    <property type="entry name" value="JQ1905"/>
</dbReference>
<dbReference type="SMR" id="Q67381"/>
<dbReference type="GlyCosmos" id="Q67381">
    <property type="glycosylation" value="6 sites, No reported glycans"/>
</dbReference>
<dbReference type="GO" id="GO:0020002">
    <property type="term" value="C:host cell plasma membrane"/>
    <property type="evidence" value="ECO:0007669"/>
    <property type="project" value="UniProtKB-SubCell"/>
</dbReference>
<dbReference type="GO" id="GO:0016020">
    <property type="term" value="C:membrane"/>
    <property type="evidence" value="ECO:0007669"/>
    <property type="project" value="UniProtKB-KW"/>
</dbReference>
<dbReference type="GO" id="GO:0019031">
    <property type="term" value="C:viral envelope"/>
    <property type="evidence" value="ECO:0007669"/>
    <property type="project" value="UniProtKB-KW"/>
</dbReference>
<dbReference type="GO" id="GO:0055036">
    <property type="term" value="C:virion membrane"/>
    <property type="evidence" value="ECO:0007669"/>
    <property type="project" value="UniProtKB-SubCell"/>
</dbReference>
<dbReference type="GO" id="GO:0046789">
    <property type="term" value="F:host cell surface receptor binding"/>
    <property type="evidence" value="ECO:0007669"/>
    <property type="project" value="InterPro"/>
</dbReference>
<dbReference type="GO" id="GO:0039654">
    <property type="term" value="P:fusion of virus membrane with host endosome membrane"/>
    <property type="evidence" value="ECO:0007669"/>
    <property type="project" value="UniProtKB-KW"/>
</dbReference>
<dbReference type="GO" id="GO:0019064">
    <property type="term" value="P:fusion of virus membrane with host plasma membrane"/>
    <property type="evidence" value="ECO:0007669"/>
    <property type="project" value="InterPro"/>
</dbReference>
<dbReference type="GO" id="GO:0046718">
    <property type="term" value="P:symbiont entry into host cell"/>
    <property type="evidence" value="ECO:0007669"/>
    <property type="project" value="UniProtKB-KW"/>
</dbReference>
<dbReference type="GO" id="GO:0019062">
    <property type="term" value="P:virion attachment to host cell"/>
    <property type="evidence" value="ECO:0007669"/>
    <property type="project" value="UniProtKB-KW"/>
</dbReference>
<dbReference type="Gene3D" id="3.90.209.20">
    <property type="match status" value="1"/>
</dbReference>
<dbReference type="Gene3D" id="2.10.77.10">
    <property type="entry name" value="Hemagglutinin Chain A, Domain 2"/>
    <property type="match status" value="1"/>
</dbReference>
<dbReference type="InterPro" id="IPR008980">
    <property type="entry name" value="Capsid_hemagglutn"/>
</dbReference>
<dbReference type="InterPro" id="IPR013828">
    <property type="entry name" value="Hemagglutn_HA1_a/b_dom_sf"/>
</dbReference>
<dbReference type="InterPro" id="IPR001364">
    <property type="entry name" value="Hemagglutn_influenz_A/B"/>
</dbReference>
<dbReference type="Pfam" id="PF00509">
    <property type="entry name" value="Hemagglutinin"/>
    <property type="match status" value="1"/>
</dbReference>
<dbReference type="SUPFAM" id="SSF49818">
    <property type="entry name" value="Viral protein domain"/>
    <property type="match status" value="1"/>
</dbReference>
<proteinExistence type="inferred from homology"/>
<organism>
    <name type="scientific">Influenza B virus (strain B/Victoria/19/1989)</name>
    <dbReference type="NCBI Taxonomy" id="291804"/>
    <lineage>
        <taxon>Viruses</taxon>
        <taxon>Riboviria</taxon>
        <taxon>Orthornavirae</taxon>
        <taxon>Negarnaviricota</taxon>
        <taxon>Polyploviricotina</taxon>
        <taxon>Insthoviricetes</taxon>
        <taxon>Articulavirales</taxon>
        <taxon>Orthomyxoviridae</taxon>
        <taxon>Betainfluenzavirus</taxon>
        <taxon>Betainfluenzavirus influenzae</taxon>
        <taxon>Influenza B virus</taxon>
    </lineage>
</organism>
<feature type="signal peptide" evidence="2">
    <location>
        <begin position="1"/>
        <end position="15"/>
    </location>
</feature>
<feature type="chain" id="PRO_0000039140" description="Hemagglutinin HA1 chain" evidence="1">
    <location>
        <begin position="16"/>
        <end position="362"/>
    </location>
</feature>
<feature type="glycosylation site" description="N-linked (GlcNAc...) asparagine; by host" evidence="2">
    <location>
        <position position="40"/>
    </location>
</feature>
<feature type="glycosylation site" description="N-linked (GlcNAc...) asparagine; by host" evidence="2">
    <location>
        <position position="74"/>
    </location>
</feature>
<feature type="glycosylation site" description="N-linked (GlcNAc...) asparagine; by host" evidence="2">
    <location>
        <position position="160"/>
    </location>
</feature>
<feature type="glycosylation site" description="N-linked (GlcNAc...) asparagine; by host" evidence="2">
    <location>
        <position position="181"/>
    </location>
</feature>
<feature type="glycosylation site" description="N-linked (GlcNAc...) asparagine; by host" evidence="2">
    <location>
        <position position="319"/>
    </location>
</feature>
<feature type="glycosylation site" description="N-linked (GlcNAc...) asparagine; by host" evidence="2">
    <location>
        <position position="348"/>
    </location>
</feature>
<feature type="non-terminal residue">
    <location>
        <position position="362"/>
    </location>
</feature>
<sequence>MKAIIVLLMVVTSNADRICTGITSSNSPHVVKTATQGEVNVTGVIPLTTTPTKSHFANLKGTKTRGKLCPKCLNCTDLDVALARPKCTGTIPSAKASILHEVKPVTFGCFPIMHDRTKIRQLPNLLRGYEHIRLSTHNVINAEKAPGGPYKIGTSGSCPNVTNGNGFFATMAWAVPKNDNNKTATNSLTVEVPYICTEGEDQITVWGFHSDNEIQMVKLYGDSKPQKFTSSANGVTTHYVSQIGGFPNQAEDGGLPQSGRIVVDYMVQKSGKTGTITYQRGILLPQKVWCASGRSKVIKGSLPLIGEADCLHEKYGGLNKSKPYYTGEHAKAIGNCPIWVKTPLKLANGTKYRPPAKLLKER</sequence>
<reference key="1">
    <citation type="journal article" date="1992" name="J. Gen. Virol.">
        <title>Antigenic and genetic characterization of the haemagglutinins of recent cocirculating strains of influenza B virus.</title>
        <authorList>
            <person name="Rota P.A."/>
            <person name="Hemphill M."/>
            <person name="Whistler T."/>
            <person name="Regnery H.L."/>
            <person name="Kendal A.P."/>
        </authorList>
    </citation>
    <scope>NUCLEOTIDE SEQUENCE [GENOMIC RNA]</scope>
</reference>
<comment type="function">
    <text>Binds to sialic acid-containing receptors on the cell surface, bringing about the attachment of the virus particle to the cell. Plays a major role in the determination of host range restriction and virulence. Class I viral fusion protein. Responsible for penetration of the virus into the cell cytoplasm by mediating the fusion of the membrane of the endocytosed virus particle with the endosomal membrane. Low pH in endosomes induce an irreversible conformational change in HA2, releasing the fusion hydrophobic peptide. Several trimers are required to form a competent fusion pore.</text>
</comment>
<comment type="subunit">
    <text>Homotrimer of disulfide-linked HA1-HA2.</text>
</comment>
<comment type="subcellular location">
    <subcellularLocation>
        <location evidence="3">Virion membrane</location>
        <topology evidence="3">Single-pass type I membrane protein</topology>
    </subcellularLocation>
    <subcellularLocation>
        <location>Host apical cell membrane</location>
        <topology>Single-pass type I membrane protein</topology>
    </subcellularLocation>
    <text>Targeted to the apical plasma membrane in epithelial polarized cells through a signal present in the transmembrane domain. Associated with glycosphingolipid- and cholesterol-enriched detergent-resistant lipid rafts.</text>
</comment>
<comment type="PTM">
    <text evidence="1">In natural infection, inactive HA is matured into HA1 and HA2 outside the cell by one or more trypsin-like, arginine-specific endoprotease secreted by the bronchial epithelial cells. One identified protease that may be involved in this process is secreted in lungs by club cells (By similarity).</text>
</comment>
<comment type="PTM">
    <text evidence="1">Palmitoylated.</text>
</comment>
<comment type="miscellaneous">
    <text>Major glycoprotein, comprises over 80% of the envelope proteins present in virus particle.</text>
</comment>
<comment type="miscellaneous">
    <text>The extent of infection into host organism is determined by HA. Influenza viruses bud from the apical surface of polarized epithelial cells (e.g. bronchial epithelial cells) into lumen of lungs and are therefore usually pneumotropic. The reason is that HA is cleaved by tryptase clara which is restricted to lungs. However, HAs of H5 and H7 pantropic avian viruses subtypes can be cleaved by furin and subtilisin-type enzymes, allowing the virus to grow in other organs than lungs.</text>
</comment>
<comment type="miscellaneous">
    <text>The influenza B genome consist of 8 RNA segments. Genetic variation of hemagglutinin and/or neuraminidase genes results in the emergence of new influenza strains. The mechanism of variation can be the result of point mutations or the result of genetic reassortment between segments of two different strains.</text>
</comment>
<comment type="similarity">
    <text evidence="3">Belongs to the influenza viruses hemagglutinin family.</text>
</comment>